<comment type="alternative products">
    <event type="alternative splicing"/>
    <isoform>
        <id>Q3E8L3-1</id>
        <name>1</name>
        <sequence type="displayed"/>
    </isoform>
    <isoform>
        <id>Q3E8L3-2</id>
        <name>2</name>
        <sequence type="described" ref="VSP_039570"/>
    </isoform>
</comment>
<name>FBD36_ARATH</name>
<feature type="chain" id="PRO_0000396023" description="Probable FBD-associated F-box protein At5g38565">
    <location>
        <begin position="1"/>
        <end position="349"/>
    </location>
</feature>
<feature type="domain" description="F-box">
    <location>
        <begin position="1"/>
        <end position="47"/>
    </location>
</feature>
<feature type="domain" description="FBD">
    <location>
        <begin position="263"/>
        <end position="311"/>
    </location>
</feature>
<feature type="splice variant" id="VSP_039570" description="In isoform 2." evidence="1">
    <original>MDIFNGLPDDVLVKILSFVPTKVAVSTSILSKRWEFLWMWLPRLDFGSPKTDLLAFLNTCQYDKEEEVGLVDFIDKKLPLHRAPFLAMYVCWKFLMNVGMKTYFHVRHLETRQREGKSLQDILSICPVLDDLSVICSVHQDVKEFTIIVPSLQSLTLFIENCEVFDGYVIDTPLKYLKLEDVHEEEHYCLLKKMPKLREAYVDVQLDDLKSLIGSITSVKRLNHMFR</original>
    <variation>MISRVLLDQSHLSSVLTICSEDSYDDGFVFNQLEHLNLCVCMP</variation>
    <location>
        <begin position="1"/>
        <end position="227"/>
    </location>
</feature>
<dbReference type="EMBL" id="AB005231">
    <property type="status" value="NOT_ANNOTATED_CDS"/>
    <property type="molecule type" value="Genomic_DNA"/>
</dbReference>
<dbReference type="EMBL" id="CP002688">
    <property type="protein sequence ID" value="AED94335.1"/>
    <property type="molecule type" value="Genomic_DNA"/>
</dbReference>
<dbReference type="EMBL" id="AK226797">
    <property type="protein sequence ID" value="BAE98895.1"/>
    <property type="molecule type" value="mRNA"/>
</dbReference>
<dbReference type="RefSeq" id="NP_680365.2">
    <molecule id="Q3E8L3-1"/>
    <property type="nucleotide sequence ID" value="NM_148060.3"/>
</dbReference>
<dbReference type="PaxDb" id="3702-AT5G38565.1"/>
<dbReference type="EnsemblPlants" id="AT5G38565.1">
    <molecule id="Q3E8L3-1"/>
    <property type="protein sequence ID" value="AT5G38565.1"/>
    <property type="gene ID" value="AT5G38565"/>
</dbReference>
<dbReference type="GeneID" id="833845"/>
<dbReference type="Gramene" id="AT5G38565.1">
    <molecule id="Q3E8L3-1"/>
    <property type="protein sequence ID" value="AT5G38565.1"/>
    <property type="gene ID" value="AT5G38565"/>
</dbReference>
<dbReference type="KEGG" id="ath:AT5G38565"/>
<dbReference type="Araport" id="AT5G38565"/>
<dbReference type="TAIR" id="AT5G38565"/>
<dbReference type="HOGENOM" id="CLU_010721_1_2_1"/>
<dbReference type="InParanoid" id="Q3E8L3"/>
<dbReference type="OMA" id="TIWADTE"/>
<dbReference type="PhylomeDB" id="Q3E8L3"/>
<dbReference type="PRO" id="PR:Q3E8L3"/>
<dbReference type="Proteomes" id="UP000006548">
    <property type="component" value="Chromosome 5"/>
</dbReference>
<dbReference type="ExpressionAtlas" id="Q3E8L3">
    <property type="expression patterns" value="baseline and differential"/>
</dbReference>
<dbReference type="CDD" id="cd22160">
    <property type="entry name" value="F-box_AtFBL13-like"/>
    <property type="match status" value="1"/>
</dbReference>
<dbReference type="Gene3D" id="3.80.10.10">
    <property type="entry name" value="Ribonuclease Inhibitor"/>
    <property type="match status" value="1"/>
</dbReference>
<dbReference type="InterPro" id="IPR036047">
    <property type="entry name" value="F-box-like_dom_sf"/>
</dbReference>
<dbReference type="InterPro" id="IPR053781">
    <property type="entry name" value="F-box_AtFBL13-like"/>
</dbReference>
<dbReference type="InterPro" id="IPR001810">
    <property type="entry name" value="F-box_dom"/>
</dbReference>
<dbReference type="InterPro" id="IPR006566">
    <property type="entry name" value="FBD"/>
</dbReference>
<dbReference type="InterPro" id="IPR050232">
    <property type="entry name" value="FBL13/AtMIF1-like"/>
</dbReference>
<dbReference type="InterPro" id="IPR032675">
    <property type="entry name" value="LRR_dom_sf"/>
</dbReference>
<dbReference type="PANTHER" id="PTHR31900">
    <property type="entry name" value="F-BOX/RNI SUPERFAMILY PROTEIN-RELATED"/>
    <property type="match status" value="1"/>
</dbReference>
<dbReference type="PANTHER" id="PTHR31900:SF28">
    <property type="entry name" value="FBD DOMAIN-CONTAINING PROTEIN"/>
    <property type="match status" value="1"/>
</dbReference>
<dbReference type="Pfam" id="PF00646">
    <property type="entry name" value="F-box"/>
    <property type="match status" value="1"/>
</dbReference>
<dbReference type="Pfam" id="PF08387">
    <property type="entry name" value="FBD"/>
    <property type="match status" value="1"/>
</dbReference>
<dbReference type="SMART" id="SM00579">
    <property type="entry name" value="FBD"/>
    <property type="match status" value="1"/>
</dbReference>
<dbReference type="SUPFAM" id="SSF81383">
    <property type="entry name" value="F-box domain"/>
    <property type="match status" value="1"/>
</dbReference>
<dbReference type="SUPFAM" id="SSF52047">
    <property type="entry name" value="RNI-like"/>
    <property type="match status" value="1"/>
</dbReference>
<reference key="1">
    <citation type="journal article" date="1997" name="DNA Res.">
        <title>Structural analysis of Arabidopsis thaliana chromosome 5. I. Sequence features of the 1.6 Mb regions covered by twenty physically assigned P1 clones.</title>
        <authorList>
            <person name="Sato S."/>
            <person name="Kotani H."/>
            <person name="Nakamura Y."/>
            <person name="Kaneko T."/>
            <person name="Asamizu E."/>
            <person name="Fukami M."/>
            <person name="Miyajima N."/>
            <person name="Tabata S."/>
        </authorList>
    </citation>
    <scope>NUCLEOTIDE SEQUENCE [LARGE SCALE GENOMIC DNA]</scope>
    <source>
        <strain>cv. Columbia</strain>
    </source>
</reference>
<reference key="2">
    <citation type="journal article" date="2017" name="Plant J.">
        <title>Araport11: a complete reannotation of the Arabidopsis thaliana reference genome.</title>
        <authorList>
            <person name="Cheng C.Y."/>
            <person name="Krishnakumar V."/>
            <person name="Chan A.P."/>
            <person name="Thibaud-Nissen F."/>
            <person name="Schobel S."/>
            <person name="Town C.D."/>
        </authorList>
    </citation>
    <scope>GENOME REANNOTATION</scope>
    <source>
        <strain>cv. Columbia</strain>
    </source>
</reference>
<reference key="3">
    <citation type="submission" date="2006-07" db="EMBL/GenBank/DDBJ databases">
        <title>Large-scale analysis of RIKEN Arabidopsis full-length (RAFL) cDNAs.</title>
        <authorList>
            <person name="Totoki Y."/>
            <person name="Seki M."/>
            <person name="Ishida J."/>
            <person name="Nakajima M."/>
            <person name="Enju A."/>
            <person name="Kamiya A."/>
            <person name="Narusaka M."/>
            <person name="Shin-i T."/>
            <person name="Nakagawa M."/>
            <person name="Sakamoto N."/>
            <person name="Oishi K."/>
            <person name="Kohara Y."/>
            <person name="Kobayashi M."/>
            <person name="Toyoda A."/>
            <person name="Sakaki Y."/>
            <person name="Sakurai T."/>
            <person name="Iida K."/>
            <person name="Akiyama K."/>
            <person name="Satou M."/>
            <person name="Toyoda T."/>
            <person name="Konagaya A."/>
            <person name="Carninci P."/>
            <person name="Kawai J."/>
            <person name="Hayashizaki Y."/>
            <person name="Shinozaki K."/>
        </authorList>
    </citation>
    <scope>NUCLEOTIDE SEQUENCE [LARGE SCALE MRNA] (ISOFORM 2)</scope>
    <source>
        <strain>cv. Columbia</strain>
    </source>
</reference>
<accession>Q3E8L3</accession>
<accession>Q0WVF3</accession>
<keyword id="KW-0025">Alternative splicing</keyword>
<keyword id="KW-1185">Reference proteome</keyword>
<protein>
    <recommendedName>
        <fullName>Probable FBD-associated F-box protein At5g38565</fullName>
    </recommendedName>
</protein>
<sequence>MDIFNGLPDDVLVKILSFVPTKVAVSTSILSKRWEFLWMWLPRLDFGSPKTDLLAFLNTCQYDKEEEVGLVDFIDKKLPLHRAPFLAMYVCWKFLMNVGMKTYFHVRHLETRQREGKSLQDILSICPVLDDLSVICSVHQDVKEFTIIVPSLQSLTLFIENCEVFDGYVIDTPLKYLKLEDVHEEEHYCLLKKMPKLREAYVDVQLDDLKSLIGSITSVKRLNHMFREKSKILGQLLKDSPNLRVLNIFKVQGHVTLSTGVDCWNQPISVPECLLESLQIFNLSHYFGKQQDLDFVVYILKNACHLKTATILADEPEHLVPNLKELTLSPRASSTCQLSIRCGLGSERS</sequence>
<evidence type="ECO:0000303" key="1">
    <source ref="3"/>
</evidence>
<proteinExistence type="evidence at transcript level"/>
<gene>
    <name type="ordered locus">At5g38565</name>
    <name type="ORF">MBB18</name>
</gene>
<organism>
    <name type="scientific">Arabidopsis thaliana</name>
    <name type="common">Mouse-ear cress</name>
    <dbReference type="NCBI Taxonomy" id="3702"/>
    <lineage>
        <taxon>Eukaryota</taxon>
        <taxon>Viridiplantae</taxon>
        <taxon>Streptophyta</taxon>
        <taxon>Embryophyta</taxon>
        <taxon>Tracheophyta</taxon>
        <taxon>Spermatophyta</taxon>
        <taxon>Magnoliopsida</taxon>
        <taxon>eudicotyledons</taxon>
        <taxon>Gunneridae</taxon>
        <taxon>Pentapetalae</taxon>
        <taxon>rosids</taxon>
        <taxon>malvids</taxon>
        <taxon>Brassicales</taxon>
        <taxon>Brassicaceae</taxon>
        <taxon>Camelineae</taxon>
        <taxon>Arabidopsis</taxon>
    </lineage>
</organism>